<protein>
    <recommendedName>
        <fullName evidence="10">Endonuclease 2</fullName>
        <shortName evidence="10">AtENDO2</shortName>
        <ecNumber evidence="6 7">3.1.30.1</ecNumber>
    </recommendedName>
    <alternativeName>
        <fullName evidence="10">Deoxyribonuclease ENDO2</fullName>
    </alternativeName>
    <alternativeName>
        <fullName evidence="10">Single-stranded-nucleate endonuclease ENDO2</fullName>
    </alternativeName>
</protein>
<accession>Q9C9G4</accession>
<accession>Q8LCL6</accession>
<reference key="1">
    <citation type="journal article" date="2000" name="Nature">
        <title>Sequence and analysis of chromosome 1 of the plant Arabidopsis thaliana.</title>
        <authorList>
            <person name="Theologis A."/>
            <person name="Ecker J.R."/>
            <person name="Palm C.J."/>
            <person name="Federspiel N.A."/>
            <person name="Kaul S."/>
            <person name="White O."/>
            <person name="Alonso J."/>
            <person name="Altafi H."/>
            <person name="Araujo R."/>
            <person name="Bowman C.L."/>
            <person name="Brooks S.Y."/>
            <person name="Buehler E."/>
            <person name="Chan A."/>
            <person name="Chao Q."/>
            <person name="Chen H."/>
            <person name="Cheuk R.F."/>
            <person name="Chin C.W."/>
            <person name="Chung M.K."/>
            <person name="Conn L."/>
            <person name="Conway A.B."/>
            <person name="Conway A.R."/>
            <person name="Creasy T.H."/>
            <person name="Dewar K."/>
            <person name="Dunn P."/>
            <person name="Etgu P."/>
            <person name="Feldblyum T.V."/>
            <person name="Feng J.-D."/>
            <person name="Fong B."/>
            <person name="Fujii C.Y."/>
            <person name="Gill J.E."/>
            <person name="Goldsmith A.D."/>
            <person name="Haas B."/>
            <person name="Hansen N.F."/>
            <person name="Hughes B."/>
            <person name="Huizar L."/>
            <person name="Hunter J.L."/>
            <person name="Jenkins J."/>
            <person name="Johnson-Hopson C."/>
            <person name="Khan S."/>
            <person name="Khaykin E."/>
            <person name="Kim C.J."/>
            <person name="Koo H.L."/>
            <person name="Kremenetskaia I."/>
            <person name="Kurtz D.B."/>
            <person name="Kwan A."/>
            <person name="Lam B."/>
            <person name="Langin-Hooper S."/>
            <person name="Lee A."/>
            <person name="Lee J.M."/>
            <person name="Lenz C.A."/>
            <person name="Li J.H."/>
            <person name="Li Y.-P."/>
            <person name="Lin X."/>
            <person name="Liu S.X."/>
            <person name="Liu Z.A."/>
            <person name="Luros J.S."/>
            <person name="Maiti R."/>
            <person name="Marziali A."/>
            <person name="Militscher J."/>
            <person name="Miranda M."/>
            <person name="Nguyen M."/>
            <person name="Nierman W.C."/>
            <person name="Osborne B.I."/>
            <person name="Pai G."/>
            <person name="Peterson J."/>
            <person name="Pham P.K."/>
            <person name="Rizzo M."/>
            <person name="Rooney T."/>
            <person name="Rowley D."/>
            <person name="Sakano H."/>
            <person name="Salzberg S.L."/>
            <person name="Schwartz J.R."/>
            <person name="Shinn P."/>
            <person name="Southwick A.M."/>
            <person name="Sun H."/>
            <person name="Tallon L.J."/>
            <person name="Tambunga G."/>
            <person name="Toriumi M.J."/>
            <person name="Town C.D."/>
            <person name="Utterback T."/>
            <person name="Van Aken S."/>
            <person name="Vaysberg M."/>
            <person name="Vysotskaia V.S."/>
            <person name="Walker M."/>
            <person name="Wu D."/>
            <person name="Yu G."/>
            <person name="Fraser C.M."/>
            <person name="Venter J.C."/>
            <person name="Davis R.W."/>
        </authorList>
    </citation>
    <scope>NUCLEOTIDE SEQUENCE [LARGE SCALE GENOMIC DNA]</scope>
    <source>
        <strain>cv. Columbia</strain>
    </source>
</reference>
<reference key="2">
    <citation type="journal article" date="2017" name="Plant J.">
        <title>Araport11: a complete reannotation of the Arabidopsis thaliana reference genome.</title>
        <authorList>
            <person name="Cheng C.Y."/>
            <person name="Krishnakumar V."/>
            <person name="Chan A.P."/>
            <person name="Thibaud-Nissen F."/>
            <person name="Schobel S."/>
            <person name="Town C.D."/>
        </authorList>
    </citation>
    <scope>GENOME REANNOTATION</scope>
    <source>
        <strain>cv. Columbia</strain>
    </source>
</reference>
<reference key="3">
    <citation type="submission" date="2002-03" db="EMBL/GenBank/DDBJ databases">
        <title>Full-length cDNA from Arabidopsis thaliana.</title>
        <authorList>
            <person name="Brover V.V."/>
            <person name="Troukhan M.E."/>
            <person name="Alexandrov N.A."/>
            <person name="Lu Y.-P."/>
            <person name="Flavell R.B."/>
            <person name="Feldmann K.A."/>
        </authorList>
    </citation>
    <scope>NUCLEOTIDE SEQUENCE [LARGE SCALE MRNA]</scope>
</reference>
<reference key="4">
    <citation type="journal article" date="2007" name="Plant J.">
        <title>Characterization of Arabidopsis thaliana mismatch specific endonucleases: application to mutation discovery by TILLING in pea.</title>
        <authorList>
            <person name="Triques K."/>
            <person name="Sturbois B."/>
            <person name="Gallais S."/>
            <person name="Dalmais M."/>
            <person name="Chauvin S."/>
            <person name="Clepet C."/>
            <person name="Aubourg S."/>
            <person name="Rameau C."/>
            <person name="Caboche M."/>
            <person name="Bendahmane A."/>
        </authorList>
    </citation>
    <scope>FUNCTION</scope>
    <scope>GENE FAMILY</scope>
    <scope>NOMENCLATURE</scope>
</reference>
<reference key="5">
    <citation type="journal article" date="2012" name="J. Agric. Food Chem.">
        <title>Arabidopsis ENDO2: its catalytic role and requirement of N-glycosylation for function.</title>
        <authorList>
            <person name="Ko C.-Y."/>
            <person name="Lai Y.-L."/>
            <person name="Liu W.-Y."/>
            <person name="Lin C.-H."/>
            <person name="Chen Y.-T."/>
            <person name="Chen L.-F.O."/>
            <person name="Lin T.-Y."/>
            <person name="Shaw J.-F."/>
        </authorList>
    </citation>
    <scope>PROTEIN SEQUENCE OF 28-36</scope>
    <scope>SIGNAL PEPTIDE</scope>
    <scope>FUNCTION</scope>
    <scope>BIOTECHNOLOGY</scope>
    <scope>GLYCOSYLATION</scope>
    <scope>BIOPHYSICOCHEMICAL PROPERTIES</scope>
    <scope>ACTIVITY REGULATION</scope>
    <scope>CATALYTIC ACTIVITY</scope>
    <source>
        <strain>cv. Columbia</strain>
    </source>
</reference>
<reference key="6">
    <citation type="journal article" date="2013" name="Plant Cell Physiol.">
        <title>The plant s1-like nuclease family has evolved a highly diverse range of catalytic capabilities.</title>
        <authorList>
            <person name="Lesniewicz K."/>
            <person name="Karlowski W.M."/>
            <person name="Pienkowska J.R."/>
            <person name="Krzywkowski P."/>
            <person name="Poreba E."/>
        </authorList>
    </citation>
    <scope>FUNCTION</scope>
    <scope>MUTAGENESIS OF 283-ALA--GLY-290</scope>
    <scope>BIOPHYSICOCHEMICAL PROPERTIES</scope>
    <scope>CATALYTIC ACTIVITY</scope>
    <scope>COFACTOR</scope>
    <scope>PROTEOLYTIC CLEAVAGE</scope>
    <scope>GENE FAMILY</scope>
</reference>
<reference key="7">
    <citation type="journal article" date="2013" name="Biocatal. Agric. Biotechnol.">
        <title>Mechanistic insights to catalysis by a zinc-dependent bi-functional nuclease from Arabidopsis thaliana.</title>
        <authorList>
            <person name="Chou T.-L."/>
            <person name="Ko T.-P."/>
            <person name="Ko C.-Y."/>
            <person name="Lin T.-Y."/>
            <person name="Guo R.-T."/>
            <person name="Yu T.-F."/>
            <person name="Chan H.-C."/>
            <person name="Shaw J.-F."/>
            <person name="Wang A.H.-J."/>
        </authorList>
    </citation>
    <scope>X-RAY CRYSTALLOGRAPHY (1.76 ANGSTROMS) OF 28-290 IN COMPLEX WITH ZINC</scope>
    <scope>GLYCOSYLATION AT ASN-118; ASN-137 AND ASN-211</scope>
    <scope>DISULFIDE BONDS</scope>
</reference>
<reference key="8">
    <citation type="journal article" date="2014" name="PLoS ONE">
        <title>Structural insights of the ssDNA binding site in the multifunctional endonuclease AtBFN2 from Arabidopsis thaliana.</title>
        <authorList>
            <person name="Yu T.-F."/>
            <person name="Maestre-Reyna M."/>
            <person name="Ko C.-Y."/>
            <person name="Ko T.-P."/>
            <person name="Sun Y.-J."/>
            <person name="Lin T.-Y."/>
            <person name="Shaw J.-F."/>
            <person name="Wang A.H.-J."/>
        </authorList>
    </citation>
    <scope>X-RAY CRYSTALLOGRAPHY (1.22 ANGSTROMS) OF 28-290 IN COMPLEX WITH ZINC AND SUBSTRATE</scope>
    <scope>GLYCOSYLATION AT ASN-118; ASN-137 AND ASN-211</scope>
    <scope>DISULFIDE BONDS</scope>
    <scope>ACTIVITY REGULATION</scope>
</reference>
<evidence type="ECO:0000250" key="1"/>
<evidence type="ECO:0000250" key="2">
    <source>
        <dbReference type="UniProtKB" id="P24021"/>
    </source>
</evidence>
<evidence type="ECO:0000250" key="3">
    <source>
        <dbReference type="UniProtKB" id="P24289"/>
    </source>
</evidence>
<evidence type="ECO:0000255" key="4">
    <source>
        <dbReference type="PROSITE-ProRule" id="PRU00498"/>
    </source>
</evidence>
<evidence type="ECO:0000269" key="5">
    <source>
    </source>
</evidence>
<evidence type="ECO:0000269" key="6">
    <source>
    </source>
</evidence>
<evidence type="ECO:0000269" key="7">
    <source>
    </source>
</evidence>
<evidence type="ECO:0000269" key="8">
    <source>
    </source>
</evidence>
<evidence type="ECO:0000269" key="9">
    <source ref="7"/>
</evidence>
<evidence type="ECO:0000303" key="10">
    <source>
    </source>
</evidence>
<evidence type="ECO:0000305" key="11"/>
<evidence type="ECO:0000312" key="12">
    <source>
        <dbReference type="Araport" id="AT1G68290"/>
    </source>
</evidence>
<evidence type="ECO:0000312" key="13">
    <source>
        <dbReference type="EMBL" id="AAG52597.1"/>
    </source>
</evidence>
<evidence type="ECO:0007744" key="14">
    <source>
        <dbReference type="PDB" id="3W52"/>
    </source>
</evidence>
<evidence type="ECO:0007744" key="15">
    <source>
        <dbReference type="PDB" id="4CWM"/>
    </source>
</evidence>
<evidence type="ECO:0007744" key="16">
    <source>
        <dbReference type="PDB" id="4CXO"/>
    </source>
</evidence>
<evidence type="ECO:0007744" key="17">
    <source>
        <dbReference type="PDB" id="4CXP"/>
    </source>
</evidence>
<evidence type="ECO:0007744" key="18">
    <source>
        <dbReference type="PDB" id="4CXV"/>
    </source>
</evidence>
<evidence type="ECO:0007829" key="19">
    <source>
        <dbReference type="PDB" id="3W52"/>
    </source>
</evidence>
<evidence type="ECO:0007829" key="20">
    <source>
        <dbReference type="PDB" id="4CXP"/>
    </source>
</evidence>
<evidence type="ECO:0007829" key="21">
    <source>
        <dbReference type="PDB" id="4CXV"/>
    </source>
</evidence>
<feature type="signal peptide" evidence="6">
    <location>
        <begin position="1"/>
        <end position="27"/>
    </location>
</feature>
<feature type="chain" id="PRO_0000417620" description="Endonuclease 2">
    <location>
        <begin position="28"/>
        <end position="282"/>
    </location>
</feature>
<feature type="propeptide" id="PRO_0000445541" description="Removed in mature form" evidence="7">
    <location>
        <begin position="283"/>
        <end position="290"/>
    </location>
</feature>
<feature type="region of interest" description="Substrate binding" evidence="8 16 18">
    <location>
        <begin position="147"/>
        <end position="196"/>
    </location>
</feature>
<feature type="binding site" evidence="8 18">
    <location>
        <begin position="28"/>
        <end position="33"/>
    </location>
    <ligand>
        <name>substrate</name>
    </ligand>
</feature>
<feature type="binding site" evidence="8 9 14 15 16 17 18">
    <location>
        <position position="28"/>
    </location>
    <ligand>
        <name>a divalent metal cation</name>
        <dbReference type="ChEBI" id="CHEBI:60240"/>
        <label>3</label>
    </ligand>
</feature>
<feature type="binding site" evidence="8 9 14 15 16 17 18">
    <location>
        <position position="33"/>
    </location>
    <ligand>
        <name>a divalent metal cation</name>
        <dbReference type="ChEBI" id="CHEBI:60240"/>
        <label>3</label>
    </ligand>
</feature>
<feature type="binding site" evidence="8 18">
    <location>
        <begin position="72"/>
        <end position="76"/>
    </location>
    <ligand>
        <name>substrate</name>
    </ligand>
</feature>
<feature type="binding site" evidence="8 15 16 17 18">
    <location>
        <position position="72"/>
    </location>
    <ligand>
        <name>a divalent metal cation</name>
        <dbReference type="ChEBI" id="CHEBI:60240"/>
        <label>1</label>
    </ligand>
</feature>
<feature type="binding site" evidence="3">
    <location>
        <begin position="85"/>
        <end position="88"/>
    </location>
    <ligand>
        <name>substrate</name>
    </ligand>
</feature>
<feature type="binding site" evidence="8 9 14 15 16 17 18">
    <location>
        <position position="85"/>
    </location>
    <ligand>
        <name>a divalent metal cation</name>
        <dbReference type="ChEBI" id="CHEBI:60240"/>
        <label>1</label>
    </ligand>
</feature>
<feature type="binding site" evidence="3">
    <location>
        <begin position="94"/>
        <end position="99"/>
    </location>
    <ligand>
        <name>substrate</name>
    </ligand>
</feature>
<feature type="binding site" evidence="8 16">
    <location>
        <position position="118"/>
    </location>
    <ligand>
        <name>substrate</name>
    </ligand>
</feature>
<feature type="binding site" evidence="8 16">
    <location>
        <position position="136"/>
    </location>
    <ligand>
        <name>substrate</name>
    </ligand>
</feature>
<feature type="binding site" evidence="8 9 14 15 16 17 18">
    <location>
        <position position="147"/>
    </location>
    <ligand>
        <name>a divalent metal cation</name>
        <dbReference type="ChEBI" id="CHEBI:60240"/>
        <label>1</label>
    </ligand>
</feature>
<feature type="binding site" evidence="8 9 14 15 16 17 18">
    <location>
        <position position="151"/>
    </location>
    <ligand>
        <name>a divalent metal cation</name>
        <dbReference type="ChEBI" id="CHEBI:60240"/>
        <label>1</label>
    </ligand>
</feature>
<feature type="binding site" evidence="8 9 14 15 16 17 18">
    <location>
        <position position="151"/>
    </location>
    <ligand>
        <name>a divalent metal cation</name>
        <dbReference type="ChEBI" id="CHEBI:60240"/>
        <label>3</label>
    </ligand>
</feature>
<feature type="binding site" evidence="8 9 14 15 16 17 18">
    <location>
        <position position="157"/>
    </location>
    <ligand>
        <name>a divalent metal cation</name>
        <dbReference type="ChEBI" id="CHEBI:60240"/>
        <label>2</label>
    </ligand>
</feature>
<feature type="binding site" evidence="8 9 14 15 16 17 18">
    <location>
        <position position="181"/>
    </location>
    <ligand>
        <name>a divalent metal cation</name>
        <dbReference type="ChEBI" id="CHEBI:60240"/>
        <label>2</label>
    </ligand>
</feature>
<feature type="binding site" evidence="8 9 14 15 16 17 18">
    <location>
        <position position="185"/>
    </location>
    <ligand>
        <name>a divalent metal cation</name>
        <dbReference type="ChEBI" id="CHEBI:60240"/>
        <label>2</label>
    </ligand>
</feature>
<feature type="site" description="Important for catalytic activity" evidence="2">
    <location>
        <position position="72"/>
    </location>
</feature>
<feature type="site" description="Important for catalytic activity" evidence="3">
    <location>
        <position position="75"/>
    </location>
</feature>
<feature type="glycosylation site" description="N-linked (GlcNAc...) asparagine" evidence="4 8 9 14 15 16 17 18">
    <location>
        <position position="118"/>
    </location>
</feature>
<feature type="glycosylation site" description="N-linked (GlcNAc...) asparagine" evidence="4 8 9 14 15 16 17 18">
    <location>
        <position position="137"/>
    </location>
</feature>
<feature type="glycosylation site" description="N-linked (GlcNAc...) asparagine" evidence="4 8 9 14 15 16 17 18">
    <location>
        <position position="211"/>
    </location>
</feature>
<feature type="disulfide bond" evidence="9 14">
    <location>
        <begin position="37"/>
        <end position="68"/>
    </location>
</feature>
<feature type="disulfide bond" evidence="8 9 14 15 16 17 18">
    <location>
        <begin position="93"/>
        <end position="245"/>
    </location>
</feature>
<feature type="disulfide bond" evidence="8 9 14 15 16 17 18">
    <location>
        <begin position="101"/>
        <end position="111"/>
    </location>
</feature>
<feature type="disulfide bond" evidence="8 9 14 15 16 17 18">
    <location>
        <begin position="226"/>
        <end position="232"/>
    </location>
</feature>
<feature type="mutagenesis site" description="Loss of activity." evidence="7">
    <location>
        <begin position="283"/>
        <end position="290"/>
    </location>
</feature>
<feature type="sequence conflict" description="In Ref. 3; AAM63596." evidence="11" ref="3">
    <original>E</original>
    <variation>D</variation>
    <location>
        <position position="224"/>
    </location>
</feature>
<feature type="helix" evidence="20">
    <location>
        <begin position="30"/>
        <end position="42"/>
    </location>
</feature>
<feature type="helix" evidence="20">
    <location>
        <begin position="46"/>
        <end position="55"/>
    </location>
</feature>
<feature type="helix" evidence="20">
    <location>
        <begin position="58"/>
        <end position="60"/>
    </location>
</feature>
<feature type="helix" evidence="20">
    <location>
        <begin position="64"/>
        <end position="67"/>
    </location>
</feature>
<feature type="helix" evidence="20">
    <location>
        <begin position="70"/>
        <end position="74"/>
    </location>
</feature>
<feature type="turn" evidence="20">
    <location>
        <begin position="75"/>
        <end position="78"/>
    </location>
</feature>
<feature type="helix" evidence="20">
    <location>
        <begin position="79"/>
        <end position="85"/>
    </location>
</feature>
<feature type="strand" evidence="20">
    <location>
        <begin position="87"/>
        <end position="89"/>
    </location>
</feature>
<feature type="strand" evidence="20">
    <location>
        <begin position="91"/>
        <end position="93"/>
    </location>
</feature>
<feature type="helix" evidence="20">
    <location>
        <begin position="97"/>
        <end position="100"/>
    </location>
</feature>
<feature type="helix" evidence="20">
    <location>
        <begin position="112"/>
        <end position="123"/>
    </location>
</feature>
<feature type="turn" evidence="21">
    <location>
        <begin position="124"/>
        <end position="127"/>
    </location>
</feature>
<feature type="helix" evidence="20">
    <location>
        <begin position="138"/>
        <end position="151"/>
    </location>
</feature>
<feature type="helix" evidence="20">
    <location>
        <begin position="155"/>
        <end position="157"/>
    </location>
</feature>
<feature type="strand" evidence="20">
    <location>
        <begin position="158"/>
        <end position="160"/>
    </location>
</feature>
<feature type="helix" evidence="20">
    <location>
        <begin position="161"/>
        <end position="163"/>
    </location>
</feature>
<feature type="turn" evidence="20">
    <location>
        <begin position="164"/>
        <end position="168"/>
    </location>
</feature>
<feature type="strand" evidence="20">
    <location>
        <begin position="170"/>
        <end position="173"/>
    </location>
</feature>
<feature type="strand" evidence="20">
    <location>
        <begin position="176"/>
        <end position="179"/>
    </location>
</feature>
<feature type="helix" evidence="20">
    <location>
        <begin position="180"/>
        <end position="185"/>
    </location>
</feature>
<feature type="helix" evidence="20">
    <location>
        <begin position="187"/>
        <end position="195"/>
    </location>
</feature>
<feature type="turn" evidence="20">
    <location>
        <begin position="196"/>
        <end position="199"/>
    </location>
</feature>
<feature type="helix" evidence="20">
    <location>
        <begin position="203"/>
        <end position="214"/>
    </location>
</feature>
<feature type="helix" evidence="20">
    <location>
        <begin position="217"/>
        <end position="224"/>
    </location>
</feature>
<feature type="strand" evidence="19">
    <location>
        <begin position="228"/>
        <end position="230"/>
    </location>
</feature>
<feature type="helix" evidence="20">
    <location>
        <begin position="233"/>
        <end position="246"/>
    </location>
</feature>
<feature type="helix" evidence="20">
    <location>
        <begin position="260"/>
        <end position="289"/>
    </location>
</feature>
<sequence>MANQKGLHVVMMIITVWLLYAAPNIHGWGKEGHEIICKIAQTRLDETAAKAVKELLPESAEGDLSSLCLWADRVKFRYHWSSPLHYINTPDACSYQYNRDCKDESGEKGRCVAGAIYNYTTQLLSYKTAASSQSQYNLTEALLFVSHFMGDIHQPLHVSYASDKGGNTIEVHWYTRKANLHHIWDSNIIETAEADLYNSALEGMVDALKKNITTEWADQVKRWETCTKKTACPDIYASEGIQAACDWAYKGVTEGDTLEDEYFYSRLPIVYQRLAQGGVRLAATLNRIFG</sequence>
<proteinExistence type="evidence at protein level"/>
<dbReference type="EC" id="3.1.30.1" evidence="6 7"/>
<dbReference type="EMBL" id="AC016447">
    <property type="protein sequence ID" value="AAG52597.1"/>
    <property type="molecule type" value="Genomic_DNA"/>
</dbReference>
<dbReference type="EMBL" id="CP002684">
    <property type="protein sequence ID" value="AEE34777.1"/>
    <property type="molecule type" value="Genomic_DNA"/>
</dbReference>
<dbReference type="EMBL" id="AY086531">
    <property type="protein sequence ID" value="AAM63596.1"/>
    <property type="molecule type" value="mRNA"/>
</dbReference>
<dbReference type="PIR" id="E96706">
    <property type="entry name" value="E96706"/>
</dbReference>
<dbReference type="RefSeq" id="NP_176996.1">
    <property type="nucleotide sequence ID" value="NM_105500.2"/>
</dbReference>
<dbReference type="PDB" id="3W52">
    <property type="method" value="X-ray"/>
    <property type="resolution" value="1.76 A"/>
    <property type="chains" value="A=28-290"/>
</dbReference>
<dbReference type="PDB" id="4CWM">
    <property type="method" value="X-ray"/>
    <property type="resolution" value="2.09 A"/>
    <property type="chains" value="A/B=28-290"/>
</dbReference>
<dbReference type="PDB" id="4CXO">
    <property type="method" value="X-ray"/>
    <property type="resolution" value="1.67 A"/>
    <property type="chains" value="A=28-290"/>
</dbReference>
<dbReference type="PDB" id="4CXP">
    <property type="method" value="X-ray"/>
    <property type="resolution" value="1.22 A"/>
    <property type="chains" value="A=28-290"/>
</dbReference>
<dbReference type="PDB" id="4CXV">
    <property type="method" value="X-ray"/>
    <property type="resolution" value="2.00 A"/>
    <property type="chains" value="A/B=28-290"/>
</dbReference>
<dbReference type="PDBsum" id="3W52"/>
<dbReference type="PDBsum" id="4CWM"/>
<dbReference type="PDBsum" id="4CXO"/>
<dbReference type="PDBsum" id="4CXP"/>
<dbReference type="PDBsum" id="4CXV"/>
<dbReference type="SMR" id="Q9C9G4"/>
<dbReference type="STRING" id="3702.Q9C9G4"/>
<dbReference type="GlyCosmos" id="Q9C9G4">
    <property type="glycosylation" value="3 sites, No reported glycans"/>
</dbReference>
<dbReference type="GlyGen" id="Q9C9G4">
    <property type="glycosylation" value="3 sites"/>
</dbReference>
<dbReference type="iPTMnet" id="Q9C9G4"/>
<dbReference type="PaxDb" id="3702-AT1G68290.1"/>
<dbReference type="ProteomicsDB" id="222715"/>
<dbReference type="EnsemblPlants" id="AT1G68290.1">
    <property type="protein sequence ID" value="AT1G68290.1"/>
    <property type="gene ID" value="AT1G68290"/>
</dbReference>
<dbReference type="GeneID" id="843158"/>
<dbReference type="Gramene" id="AT1G68290.1">
    <property type="protein sequence ID" value="AT1G68290.1"/>
    <property type="gene ID" value="AT1G68290"/>
</dbReference>
<dbReference type="KEGG" id="ath:AT1G68290"/>
<dbReference type="Araport" id="AT1G68290"/>
<dbReference type="TAIR" id="AT1G68290">
    <property type="gene designation" value="ENDO2"/>
</dbReference>
<dbReference type="eggNOG" id="ENOG502QRXU">
    <property type="taxonomic scope" value="Eukaryota"/>
</dbReference>
<dbReference type="HOGENOM" id="CLU_044365_3_0_1"/>
<dbReference type="InParanoid" id="Q9C9G4"/>
<dbReference type="OMA" id="QNITGEW"/>
<dbReference type="OrthoDB" id="441446at2759"/>
<dbReference type="PhylomeDB" id="Q9C9G4"/>
<dbReference type="BRENDA" id="3.1.30.2">
    <property type="organism ID" value="399"/>
</dbReference>
<dbReference type="EvolutionaryTrace" id="Q9C9G4"/>
<dbReference type="PRO" id="PR:Q9C9G4"/>
<dbReference type="Proteomes" id="UP000006548">
    <property type="component" value="Chromosome 1"/>
</dbReference>
<dbReference type="ExpressionAtlas" id="Q9C9G4">
    <property type="expression patterns" value="baseline and differential"/>
</dbReference>
<dbReference type="GO" id="GO:1990238">
    <property type="term" value="F:double-stranded DNA endonuclease activity"/>
    <property type="evidence" value="ECO:0000314"/>
    <property type="project" value="UniProtKB"/>
</dbReference>
<dbReference type="GO" id="GO:0004519">
    <property type="term" value="F:endonuclease activity"/>
    <property type="evidence" value="ECO:0000314"/>
    <property type="project" value="UniProtKB"/>
</dbReference>
<dbReference type="GO" id="GO:0046872">
    <property type="term" value="F:metal ion binding"/>
    <property type="evidence" value="ECO:0007669"/>
    <property type="project" value="UniProtKB-KW"/>
</dbReference>
<dbReference type="GO" id="GO:0003676">
    <property type="term" value="F:nucleic acid binding"/>
    <property type="evidence" value="ECO:0007669"/>
    <property type="project" value="InterPro"/>
</dbReference>
<dbReference type="GO" id="GO:0004521">
    <property type="term" value="F:RNA endonuclease activity"/>
    <property type="evidence" value="ECO:0000314"/>
    <property type="project" value="UniProtKB"/>
</dbReference>
<dbReference type="GO" id="GO:0000014">
    <property type="term" value="F:single-stranded DNA endodeoxyribonuclease activity"/>
    <property type="evidence" value="ECO:0000314"/>
    <property type="project" value="UniProtKB"/>
</dbReference>
<dbReference type="GO" id="GO:0043765">
    <property type="term" value="F:T/G mismatch-specific endonuclease activity"/>
    <property type="evidence" value="ECO:0000314"/>
    <property type="project" value="UniProtKB"/>
</dbReference>
<dbReference type="GO" id="GO:0006308">
    <property type="term" value="P:DNA catabolic process"/>
    <property type="evidence" value="ECO:0000314"/>
    <property type="project" value="UniProtKB"/>
</dbReference>
<dbReference type="CDD" id="cd11010">
    <property type="entry name" value="S1-P1_nuclease"/>
    <property type="match status" value="1"/>
</dbReference>
<dbReference type="FunFam" id="1.10.575.10:FF:000002">
    <property type="entry name" value="Endonuclease 2"/>
    <property type="match status" value="1"/>
</dbReference>
<dbReference type="Gene3D" id="1.10.575.10">
    <property type="entry name" value="P1 Nuclease"/>
    <property type="match status" value="1"/>
</dbReference>
<dbReference type="InterPro" id="IPR008947">
    <property type="entry name" value="PLipase_C/P1_nuclease_dom_sf"/>
</dbReference>
<dbReference type="InterPro" id="IPR003154">
    <property type="entry name" value="S1/P1nuclease"/>
</dbReference>
<dbReference type="PANTHER" id="PTHR33146:SF27">
    <property type="entry name" value="ENDONUCLEASE 2"/>
    <property type="match status" value="1"/>
</dbReference>
<dbReference type="PANTHER" id="PTHR33146">
    <property type="entry name" value="ENDONUCLEASE 4"/>
    <property type="match status" value="1"/>
</dbReference>
<dbReference type="Pfam" id="PF02265">
    <property type="entry name" value="S1-P1_nuclease"/>
    <property type="match status" value="1"/>
</dbReference>
<dbReference type="SUPFAM" id="SSF48537">
    <property type="entry name" value="Phospholipase C/P1 nuclease"/>
    <property type="match status" value="1"/>
</dbReference>
<keyword id="KW-0002">3D-structure</keyword>
<keyword id="KW-0106">Calcium</keyword>
<keyword id="KW-0903">Direct protein sequencing</keyword>
<keyword id="KW-1015">Disulfide bond</keyword>
<keyword id="KW-0255">Endonuclease</keyword>
<keyword id="KW-0325">Glycoprotein</keyword>
<keyword id="KW-0378">Hydrolase</keyword>
<keyword id="KW-0464">Manganese</keyword>
<keyword id="KW-0479">Metal-binding</keyword>
<keyword id="KW-0540">Nuclease</keyword>
<keyword id="KW-1185">Reference proteome</keyword>
<keyword id="KW-0732">Signal</keyword>
<keyword id="KW-0862">Zinc</keyword>
<gene>
    <name evidence="10" type="primary">ENDO2</name>
    <name evidence="12" type="ordered locus">At1g68290</name>
    <name evidence="13" type="ORF">T22E19.8</name>
</gene>
<organism>
    <name type="scientific">Arabidopsis thaliana</name>
    <name type="common">Mouse-ear cress</name>
    <dbReference type="NCBI Taxonomy" id="3702"/>
    <lineage>
        <taxon>Eukaryota</taxon>
        <taxon>Viridiplantae</taxon>
        <taxon>Streptophyta</taxon>
        <taxon>Embryophyta</taxon>
        <taxon>Tracheophyta</taxon>
        <taxon>Spermatophyta</taxon>
        <taxon>Magnoliopsida</taxon>
        <taxon>eudicotyledons</taxon>
        <taxon>Gunneridae</taxon>
        <taxon>Pentapetalae</taxon>
        <taxon>rosids</taxon>
        <taxon>malvids</taxon>
        <taxon>Brassicales</taxon>
        <taxon>Brassicaceae</taxon>
        <taxon>Camelineae</taxon>
        <taxon>Arabidopsis</taxon>
    </lineage>
</organism>
<name>ENDO2_ARATH</name>
<comment type="function">
    <text evidence="5 6 7">Endonuclease mostly active on RNA and ssDNA, and to a lower extent, on dsDNA (PubMed:22506810, PubMed:23620482). Can cleave mismatch regions in heteroduplex DNA containing single base pair mismatches or insertion/deletion bases (PubMed:22506810). In contradiction with PubMed:22506810, cannot hydrolyze single-stranded DNA and does not cleave mismatches (PubMed:17651368).</text>
</comment>
<comment type="catalytic activity">
    <reaction evidence="6 7">
        <text>Endonucleolytic cleavage to 5'-phosphomononucleotide and 5'-phosphooligonucleotide end-products.</text>
        <dbReference type="EC" id="3.1.30.1"/>
    </reaction>
</comment>
<comment type="cofactor">
    <cofactor evidence="7">
        <name>Mn(2+)</name>
        <dbReference type="ChEBI" id="CHEBI:29035"/>
    </cofactor>
    <cofactor evidence="7">
        <name>Ca(2+)</name>
        <dbReference type="ChEBI" id="CHEBI:29108"/>
    </cofactor>
    <cofactor evidence="7 8 9">
        <name>Zn(2+)</name>
        <dbReference type="ChEBI" id="CHEBI:29105"/>
    </cofactor>
    <text evidence="7 8 9">Binds 3 divalent metal cations (PubMed:23620482, PubMed:25157844, Ref.7). Use Mn(2+) and Ca(2+) as cofactors with ssDNA as substrate in basic conditions (pH 8) (PubMed:23620482). Can use Zn(2+) with lower efficiency with dsDNA and ssDNA as substrates in acidic conditions (pH 5.5) (PubMed:23620482, PubMed:25157844, Ref.7).</text>
</comment>
<comment type="activity regulation">
    <text evidence="6 8">ssDNase activity is inhibited by the divalent cation chelator EDTA and the reducing agent DTT (PubMed:22506810). Divalent metal ions (e.g. Ca(2+), Mg(2+) and Zn(2+)) and DTT represses RNase activity (PubMed:22506810, PubMed:25157844). RNase activity is enhanced by EDTA (PubMed:22506810). Also repressed by vanadate (VO(4)(3-)) and phosphate (PO(4)(3-)) by occupying the active site (PubMed:25157844).</text>
</comment>
<comment type="biophysicochemical properties">
    <kinetics>
        <KM evidence="6">8.6 mM for ssDNA (at pH 7.0 and 37 degrees Celsius)</KM>
        <text evidence="6">kcat is 19171 min(-1) with ssDNA as substrate (at pH 7.0 and 37 degrees Celsius).</text>
    </kinetics>
    <phDependence>
        <text evidence="6 7">Optimum pH is 7-8 with ssDNA as substrate (PubMed:22506810, PubMed:23620482). Optimum pH is 6 with RNA as substrate (PubMed:22506810). Optimum pH is 5.5 with dsDNA as substrate (PubMed:23620482).</text>
    </phDependence>
    <temperatureDependence>
        <text evidence="6">Optimum temperature is 70 degrees Celsius. Low activity at temperatures below 30 degrees Celsius. Above 70 degrees Celsius, the catalytic activity declines.</text>
    </temperatureDependence>
</comment>
<comment type="subunit">
    <text evidence="1">Monomer.</text>
</comment>
<comment type="PTM">
    <text evidence="6">N-glycosylation is required for enzymatic stability and activity.</text>
</comment>
<comment type="biotechnology">
    <text evidence="6">Can be applied to high-throughput detection of single base mutation.</text>
</comment>
<comment type="similarity">
    <text evidence="11">Belongs to the nuclease type I family.</text>
</comment>